<keyword id="KW-0687">Ribonucleoprotein</keyword>
<keyword id="KW-0689">Ribosomal protein</keyword>
<keyword id="KW-0694">RNA-binding</keyword>
<keyword id="KW-0699">rRNA-binding</keyword>
<gene>
    <name evidence="1" type="primary">rplI</name>
    <name type="ordered locus">MHJ_0645</name>
</gene>
<evidence type="ECO:0000255" key="1">
    <source>
        <dbReference type="HAMAP-Rule" id="MF_00503"/>
    </source>
</evidence>
<evidence type="ECO:0000305" key="2"/>
<dbReference type="EMBL" id="AE017243">
    <property type="protein sequence ID" value="AAZ44728.1"/>
    <property type="molecule type" value="Genomic_DNA"/>
</dbReference>
<dbReference type="RefSeq" id="WP_011284368.1">
    <property type="nucleotide sequence ID" value="NC_007295.1"/>
</dbReference>
<dbReference type="SMR" id="Q4A943"/>
<dbReference type="GeneID" id="41334947"/>
<dbReference type="KEGG" id="mhj:MHJ_0645"/>
<dbReference type="eggNOG" id="COG0359">
    <property type="taxonomic scope" value="Bacteria"/>
</dbReference>
<dbReference type="HOGENOM" id="CLU_078938_3_1_14"/>
<dbReference type="OrthoDB" id="9788336at2"/>
<dbReference type="Proteomes" id="UP000000548">
    <property type="component" value="Chromosome"/>
</dbReference>
<dbReference type="GO" id="GO:1990904">
    <property type="term" value="C:ribonucleoprotein complex"/>
    <property type="evidence" value="ECO:0007669"/>
    <property type="project" value="UniProtKB-KW"/>
</dbReference>
<dbReference type="GO" id="GO:0005840">
    <property type="term" value="C:ribosome"/>
    <property type="evidence" value="ECO:0007669"/>
    <property type="project" value="UniProtKB-KW"/>
</dbReference>
<dbReference type="GO" id="GO:0019843">
    <property type="term" value="F:rRNA binding"/>
    <property type="evidence" value="ECO:0007669"/>
    <property type="project" value="UniProtKB-UniRule"/>
</dbReference>
<dbReference type="GO" id="GO:0003735">
    <property type="term" value="F:structural constituent of ribosome"/>
    <property type="evidence" value="ECO:0007669"/>
    <property type="project" value="InterPro"/>
</dbReference>
<dbReference type="GO" id="GO:0006412">
    <property type="term" value="P:translation"/>
    <property type="evidence" value="ECO:0007669"/>
    <property type="project" value="UniProtKB-UniRule"/>
</dbReference>
<dbReference type="Gene3D" id="3.10.430.100">
    <property type="entry name" value="Ribosomal protein L9, C-terminal domain"/>
    <property type="match status" value="1"/>
</dbReference>
<dbReference type="Gene3D" id="3.40.5.10">
    <property type="entry name" value="Ribosomal protein L9, N-terminal domain"/>
    <property type="match status" value="1"/>
</dbReference>
<dbReference type="HAMAP" id="MF_00503">
    <property type="entry name" value="Ribosomal_bL9"/>
    <property type="match status" value="1"/>
</dbReference>
<dbReference type="InterPro" id="IPR000244">
    <property type="entry name" value="Ribosomal_bL9"/>
</dbReference>
<dbReference type="InterPro" id="IPR009027">
    <property type="entry name" value="Ribosomal_bL9/RNase_H1_N"/>
</dbReference>
<dbReference type="InterPro" id="IPR020594">
    <property type="entry name" value="Ribosomal_bL9_bac/chp"/>
</dbReference>
<dbReference type="InterPro" id="IPR020069">
    <property type="entry name" value="Ribosomal_bL9_C"/>
</dbReference>
<dbReference type="InterPro" id="IPR036791">
    <property type="entry name" value="Ribosomal_bL9_C_sf"/>
</dbReference>
<dbReference type="InterPro" id="IPR020070">
    <property type="entry name" value="Ribosomal_bL9_N"/>
</dbReference>
<dbReference type="InterPro" id="IPR036935">
    <property type="entry name" value="Ribosomal_bL9_N_sf"/>
</dbReference>
<dbReference type="NCBIfam" id="TIGR00158">
    <property type="entry name" value="L9"/>
    <property type="match status" value="1"/>
</dbReference>
<dbReference type="PANTHER" id="PTHR21368">
    <property type="entry name" value="50S RIBOSOMAL PROTEIN L9"/>
    <property type="match status" value="1"/>
</dbReference>
<dbReference type="Pfam" id="PF03948">
    <property type="entry name" value="Ribosomal_L9_C"/>
    <property type="match status" value="1"/>
</dbReference>
<dbReference type="Pfam" id="PF01281">
    <property type="entry name" value="Ribosomal_L9_N"/>
    <property type="match status" value="1"/>
</dbReference>
<dbReference type="SUPFAM" id="SSF55658">
    <property type="entry name" value="L9 N-domain-like"/>
    <property type="match status" value="1"/>
</dbReference>
<dbReference type="SUPFAM" id="SSF55653">
    <property type="entry name" value="Ribosomal protein L9 C-domain"/>
    <property type="match status" value="1"/>
</dbReference>
<dbReference type="PROSITE" id="PS00651">
    <property type="entry name" value="RIBOSOMAL_L9"/>
    <property type="match status" value="1"/>
</dbReference>
<comment type="function">
    <text evidence="1">Binds to the 23S rRNA.</text>
</comment>
<comment type="similarity">
    <text evidence="1">Belongs to the bacterial ribosomal protein bL9 family.</text>
</comment>
<organism>
    <name type="scientific">Mesomycoplasma hyopneumoniae (strain J / ATCC 25934 / NCTC 10110)</name>
    <name type="common">Mycoplasma hyopneumoniae</name>
    <dbReference type="NCBI Taxonomy" id="262719"/>
    <lineage>
        <taxon>Bacteria</taxon>
        <taxon>Bacillati</taxon>
        <taxon>Mycoplasmatota</taxon>
        <taxon>Mycoplasmoidales</taxon>
        <taxon>Metamycoplasmataceae</taxon>
        <taxon>Mesomycoplasma</taxon>
    </lineage>
</organism>
<protein>
    <recommendedName>
        <fullName evidence="1">Large ribosomal subunit protein bL9</fullName>
    </recommendedName>
    <alternativeName>
        <fullName evidence="2">50S ribosomal protein L9</fullName>
    </alternativeName>
</protein>
<reference key="1">
    <citation type="journal article" date="2005" name="J. Bacteriol.">
        <title>Swine and poultry pathogens: the complete genome sequences of two strains of Mycoplasma hyopneumoniae and a strain of Mycoplasma synoviae.</title>
        <authorList>
            <person name="Vasconcelos A.T.R."/>
            <person name="Ferreira H.B."/>
            <person name="Bizarro C.V."/>
            <person name="Bonatto S.L."/>
            <person name="Carvalho M.O."/>
            <person name="Pinto P.M."/>
            <person name="Almeida D.F."/>
            <person name="Almeida L.G.P."/>
            <person name="Almeida R."/>
            <person name="Alves-Junior L."/>
            <person name="Assuncao E.N."/>
            <person name="Azevedo V.A.C."/>
            <person name="Bogo M.R."/>
            <person name="Brigido M.M."/>
            <person name="Brocchi M."/>
            <person name="Burity H.A."/>
            <person name="Camargo A.A."/>
            <person name="Camargo S.S."/>
            <person name="Carepo M.S."/>
            <person name="Carraro D.M."/>
            <person name="de Mattos Cascardo J.C."/>
            <person name="Castro L.A."/>
            <person name="Cavalcanti G."/>
            <person name="Chemale G."/>
            <person name="Collevatti R.G."/>
            <person name="Cunha C.W."/>
            <person name="Dallagiovanna B."/>
            <person name="Dambros B.P."/>
            <person name="Dellagostin O.A."/>
            <person name="Falcao C."/>
            <person name="Fantinatti-Garboggini F."/>
            <person name="Felipe M.S.S."/>
            <person name="Fiorentin L."/>
            <person name="Franco G.R."/>
            <person name="Freitas N.S.A."/>
            <person name="Frias D."/>
            <person name="Grangeiro T.B."/>
            <person name="Grisard E.C."/>
            <person name="Guimaraes C.T."/>
            <person name="Hungria M."/>
            <person name="Jardim S.N."/>
            <person name="Krieger M.A."/>
            <person name="Laurino J.P."/>
            <person name="Lima L.F.A."/>
            <person name="Lopes M.I."/>
            <person name="Loreto E.L.S."/>
            <person name="Madeira H.M.F."/>
            <person name="Manfio G.P."/>
            <person name="Maranhao A.Q."/>
            <person name="Martinkovics C.T."/>
            <person name="Medeiros S.R.B."/>
            <person name="Moreira M.A.M."/>
            <person name="Neiva M."/>
            <person name="Ramalho-Neto C.E."/>
            <person name="Nicolas M.F."/>
            <person name="Oliveira S.C."/>
            <person name="Paixao R.F.C."/>
            <person name="Pedrosa F.O."/>
            <person name="Pena S.D.J."/>
            <person name="Pereira M."/>
            <person name="Pereira-Ferrari L."/>
            <person name="Piffer I."/>
            <person name="Pinto L.S."/>
            <person name="Potrich D.P."/>
            <person name="Salim A.C.M."/>
            <person name="Santos F.R."/>
            <person name="Schmitt R."/>
            <person name="Schneider M.P.C."/>
            <person name="Schrank A."/>
            <person name="Schrank I.S."/>
            <person name="Schuck A.F."/>
            <person name="Seuanez H.N."/>
            <person name="Silva D.W."/>
            <person name="Silva R."/>
            <person name="Silva S.C."/>
            <person name="Soares C.M.A."/>
            <person name="Souza K.R.L."/>
            <person name="Souza R.C."/>
            <person name="Staats C.C."/>
            <person name="Steffens M.B.R."/>
            <person name="Teixeira S.M.R."/>
            <person name="Urmenyi T.P."/>
            <person name="Vainstein M.H."/>
            <person name="Zuccherato L.W."/>
            <person name="Simpson A.J.G."/>
            <person name="Zaha A."/>
        </authorList>
    </citation>
    <scope>NUCLEOTIDE SEQUENCE [LARGE SCALE GENOMIC DNA]</scope>
    <source>
        <strain>J / ATCC 25934 / NCTC 10110</strain>
    </source>
</reference>
<name>RL9_MESHJ</name>
<accession>Q4A943</accession>
<feature type="chain" id="PRO_0000258470" description="Large ribosomal subunit protein bL9">
    <location>
        <begin position="1"/>
        <end position="145"/>
    </location>
</feature>
<sequence length="145" mass="16410">MKVILIKDTKDGKANTIIDVSPGYATNFLFKNKLAEPLNARTEKLLVKRKQQIEIEKQEKQEQIAKLKIEIEKLVLWFKLKGNKESVHGAITAKKIKKELEIKGIFVDKQAIQTSGISTFGTSFVDIKLSSQTIAKLKINITKDE</sequence>
<proteinExistence type="inferred from homology"/>